<comment type="function">
    <text>In addition to polymerase activity, this DNA polymerase exhibits 3'-5' and 5'-3' exonuclease activity. It is able to utilize nicked circular duplex DNA as a template and can unwind the parental DNA strand from its template.</text>
</comment>
<comment type="catalytic activity">
    <reaction>
        <text>DNA(n) + a 2'-deoxyribonucleoside 5'-triphosphate = DNA(n+1) + diphosphate</text>
        <dbReference type="Rhea" id="RHEA:22508"/>
        <dbReference type="Rhea" id="RHEA-COMP:17339"/>
        <dbReference type="Rhea" id="RHEA-COMP:17340"/>
        <dbReference type="ChEBI" id="CHEBI:33019"/>
        <dbReference type="ChEBI" id="CHEBI:61560"/>
        <dbReference type="ChEBI" id="CHEBI:173112"/>
        <dbReference type="EC" id="2.7.7.7"/>
    </reaction>
</comment>
<comment type="subunit">
    <text>Single-chain monomer with multiple functions.</text>
</comment>
<comment type="similarity">
    <text evidence="1">Belongs to the DNA polymerase type-A family.</text>
</comment>
<keyword id="KW-0227">DNA damage</keyword>
<keyword id="KW-0234">DNA repair</keyword>
<keyword id="KW-0235">DNA replication</keyword>
<keyword id="KW-0238">DNA-binding</keyword>
<keyword id="KW-0239">DNA-directed DNA polymerase</keyword>
<keyword id="KW-0269">Exonuclease</keyword>
<keyword id="KW-0378">Hydrolase</keyword>
<keyword id="KW-0540">Nuclease</keyword>
<keyword id="KW-0548">Nucleotidyltransferase</keyword>
<keyword id="KW-1185">Reference proteome</keyword>
<keyword id="KW-0808">Transferase</keyword>
<name>DPO1_SALTY</name>
<protein>
    <recommendedName>
        <fullName>DNA polymerase I</fullName>
        <shortName>POL I</shortName>
        <ecNumber>2.7.7.7</ecNumber>
    </recommendedName>
</protein>
<organism>
    <name type="scientific">Salmonella typhimurium (strain LT2 / SGSC1412 / ATCC 700720)</name>
    <dbReference type="NCBI Taxonomy" id="99287"/>
    <lineage>
        <taxon>Bacteria</taxon>
        <taxon>Pseudomonadati</taxon>
        <taxon>Pseudomonadota</taxon>
        <taxon>Gammaproteobacteria</taxon>
        <taxon>Enterobacterales</taxon>
        <taxon>Enterobacteriaceae</taxon>
        <taxon>Salmonella</taxon>
    </lineage>
</organism>
<proteinExistence type="inferred from homology"/>
<gene>
    <name type="primary">polA</name>
    <name type="ordered locus">STM3999</name>
</gene>
<accession>Q9F173</accession>
<evidence type="ECO:0000305" key="1"/>
<dbReference type="EC" id="2.7.7.7"/>
<dbReference type="EMBL" id="AF071212">
    <property type="protein sequence ID" value="AAG43170.1"/>
    <property type="molecule type" value="Genomic_DNA"/>
</dbReference>
<dbReference type="EMBL" id="AE006468">
    <property type="protein sequence ID" value="AAL22838.1"/>
    <property type="molecule type" value="Genomic_DNA"/>
</dbReference>
<dbReference type="RefSeq" id="NP_462879.1">
    <property type="nucleotide sequence ID" value="NC_003197.2"/>
</dbReference>
<dbReference type="RefSeq" id="WP_000249972.1">
    <property type="nucleotide sequence ID" value="NC_003197.2"/>
</dbReference>
<dbReference type="SMR" id="Q9F173"/>
<dbReference type="STRING" id="99287.STM3999"/>
<dbReference type="PaxDb" id="99287-STM3999"/>
<dbReference type="GeneID" id="1255525"/>
<dbReference type="KEGG" id="stm:STM3999"/>
<dbReference type="PATRIC" id="fig|99287.12.peg.4214"/>
<dbReference type="HOGENOM" id="CLU_004675_0_1_6"/>
<dbReference type="OMA" id="NRPPMPD"/>
<dbReference type="PhylomeDB" id="Q9F173"/>
<dbReference type="BioCyc" id="SENT99287:STM3999-MONOMER"/>
<dbReference type="Proteomes" id="UP000001014">
    <property type="component" value="Chromosome"/>
</dbReference>
<dbReference type="GO" id="GO:0008408">
    <property type="term" value="F:3'-5' exonuclease activity"/>
    <property type="evidence" value="ECO:0007669"/>
    <property type="project" value="InterPro"/>
</dbReference>
<dbReference type="GO" id="GO:0008409">
    <property type="term" value="F:5'-3' exonuclease activity"/>
    <property type="evidence" value="ECO:0007669"/>
    <property type="project" value="InterPro"/>
</dbReference>
<dbReference type="GO" id="GO:0003677">
    <property type="term" value="F:DNA binding"/>
    <property type="evidence" value="ECO:0007669"/>
    <property type="project" value="UniProtKB-KW"/>
</dbReference>
<dbReference type="GO" id="GO:0003887">
    <property type="term" value="F:DNA-directed DNA polymerase activity"/>
    <property type="evidence" value="ECO:0000318"/>
    <property type="project" value="GO_Central"/>
</dbReference>
<dbReference type="GO" id="GO:0006261">
    <property type="term" value="P:DNA-templated DNA replication"/>
    <property type="evidence" value="ECO:0007669"/>
    <property type="project" value="InterPro"/>
</dbReference>
<dbReference type="GO" id="GO:0006302">
    <property type="term" value="P:double-strand break repair"/>
    <property type="evidence" value="ECO:0000318"/>
    <property type="project" value="GO_Central"/>
</dbReference>
<dbReference type="CDD" id="cd08637">
    <property type="entry name" value="DNA_pol_A_pol_I_C"/>
    <property type="match status" value="1"/>
</dbReference>
<dbReference type="CDD" id="cd06139">
    <property type="entry name" value="DNA_polA_I_Ecoli_like_exo"/>
    <property type="match status" value="1"/>
</dbReference>
<dbReference type="CDD" id="cd09898">
    <property type="entry name" value="H3TH_53EXO"/>
    <property type="match status" value="1"/>
</dbReference>
<dbReference type="CDD" id="cd09859">
    <property type="entry name" value="PIN_53EXO"/>
    <property type="match status" value="1"/>
</dbReference>
<dbReference type="FunFam" id="1.10.150.20:FF:000002">
    <property type="entry name" value="DNA polymerase I"/>
    <property type="match status" value="1"/>
</dbReference>
<dbReference type="FunFam" id="1.10.150.20:FF:000003">
    <property type="entry name" value="DNA polymerase I"/>
    <property type="match status" value="1"/>
</dbReference>
<dbReference type="FunFam" id="1.20.1060.10:FF:000001">
    <property type="entry name" value="DNA polymerase I"/>
    <property type="match status" value="1"/>
</dbReference>
<dbReference type="FunFam" id="3.30.420.10:FF:000026">
    <property type="entry name" value="DNA polymerase I"/>
    <property type="match status" value="1"/>
</dbReference>
<dbReference type="FunFam" id="3.40.50.1010:FF:000001">
    <property type="entry name" value="DNA polymerase I"/>
    <property type="match status" value="1"/>
</dbReference>
<dbReference type="Gene3D" id="3.30.70.370">
    <property type="match status" value="1"/>
</dbReference>
<dbReference type="Gene3D" id="1.10.150.20">
    <property type="entry name" value="5' to 3' exonuclease, C-terminal subdomain"/>
    <property type="match status" value="2"/>
</dbReference>
<dbReference type="Gene3D" id="3.40.50.1010">
    <property type="entry name" value="5'-nuclease"/>
    <property type="match status" value="1"/>
</dbReference>
<dbReference type="Gene3D" id="3.30.420.10">
    <property type="entry name" value="Ribonuclease H-like superfamily/Ribonuclease H"/>
    <property type="match status" value="1"/>
</dbReference>
<dbReference type="Gene3D" id="1.20.1060.10">
    <property type="entry name" value="Taq DNA Polymerase, Chain T, domain 4"/>
    <property type="match status" value="1"/>
</dbReference>
<dbReference type="InterPro" id="IPR002562">
    <property type="entry name" value="3'-5'_exonuclease_dom"/>
</dbReference>
<dbReference type="InterPro" id="IPR020046">
    <property type="entry name" value="5-3_exonucl_a-hlix_arch_N"/>
</dbReference>
<dbReference type="InterPro" id="IPR002421">
    <property type="entry name" value="5-3_exonuclease"/>
</dbReference>
<dbReference type="InterPro" id="IPR036279">
    <property type="entry name" value="5-3_exonuclease_C_sf"/>
</dbReference>
<dbReference type="InterPro" id="IPR019760">
    <property type="entry name" value="DNA-dir_DNA_pol_A_CS"/>
</dbReference>
<dbReference type="InterPro" id="IPR001098">
    <property type="entry name" value="DNA-dir_DNA_pol_A_palm_dom"/>
</dbReference>
<dbReference type="InterPro" id="IPR043502">
    <property type="entry name" value="DNA/RNA_pol_sf"/>
</dbReference>
<dbReference type="InterPro" id="IPR020045">
    <property type="entry name" value="DNA_polI_H3TH"/>
</dbReference>
<dbReference type="InterPro" id="IPR018320">
    <property type="entry name" value="DNA_polymerase_1"/>
</dbReference>
<dbReference type="InterPro" id="IPR002298">
    <property type="entry name" value="DNA_polymerase_A"/>
</dbReference>
<dbReference type="InterPro" id="IPR008918">
    <property type="entry name" value="HhH2"/>
</dbReference>
<dbReference type="InterPro" id="IPR029060">
    <property type="entry name" value="PIN-like_dom_sf"/>
</dbReference>
<dbReference type="InterPro" id="IPR012337">
    <property type="entry name" value="RNaseH-like_sf"/>
</dbReference>
<dbReference type="InterPro" id="IPR036397">
    <property type="entry name" value="RNaseH_sf"/>
</dbReference>
<dbReference type="NCBIfam" id="TIGR00593">
    <property type="entry name" value="pola"/>
    <property type="match status" value="1"/>
</dbReference>
<dbReference type="NCBIfam" id="NF004397">
    <property type="entry name" value="PRK05755.1"/>
    <property type="match status" value="1"/>
</dbReference>
<dbReference type="PANTHER" id="PTHR10133">
    <property type="entry name" value="DNA POLYMERASE I"/>
    <property type="match status" value="1"/>
</dbReference>
<dbReference type="PANTHER" id="PTHR10133:SF27">
    <property type="entry name" value="DNA POLYMERASE NU"/>
    <property type="match status" value="1"/>
</dbReference>
<dbReference type="Pfam" id="PF01367">
    <property type="entry name" value="5_3_exonuc"/>
    <property type="match status" value="1"/>
</dbReference>
<dbReference type="Pfam" id="PF02739">
    <property type="entry name" value="5_3_exonuc_N"/>
    <property type="match status" value="1"/>
</dbReference>
<dbReference type="Pfam" id="PF00476">
    <property type="entry name" value="DNA_pol_A"/>
    <property type="match status" value="1"/>
</dbReference>
<dbReference type="Pfam" id="PF01612">
    <property type="entry name" value="DNA_pol_A_exo1"/>
    <property type="match status" value="1"/>
</dbReference>
<dbReference type="PRINTS" id="PR00868">
    <property type="entry name" value="DNAPOLI"/>
</dbReference>
<dbReference type="SMART" id="SM00474">
    <property type="entry name" value="35EXOc"/>
    <property type="match status" value="1"/>
</dbReference>
<dbReference type="SMART" id="SM00475">
    <property type="entry name" value="53EXOc"/>
    <property type="match status" value="1"/>
</dbReference>
<dbReference type="SMART" id="SM00279">
    <property type="entry name" value="HhH2"/>
    <property type="match status" value="1"/>
</dbReference>
<dbReference type="SMART" id="SM00482">
    <property type="entry name" value="POLAc"/>
    <property type="match status" value="1"/>
</dbReference>
<dbReference type="SUPFAM" id="SSF47807">
    <property type="entry name" value="5' to 3' exonuclease, C-terminal subdomain"/>
    <property type="match status" value="1"/>
</dbReference>
<dbReference type="SUPFAM" id="SSF56672">
    <property type="entry name" value="DNA/RNA polymerases"/>
    <property type="match status" value="1"/>
</dbReference>
<dbReference type="SUPFAM" id="SSF88723">
    <property type="entry name" value="PIN domain-like"/>
    <property type="match status" value="1"/>
</dbReference>
<dbReference type="SUPFAM" id="SSF53098">
    <property type="entry name" value="Ribonuclease H-like"/>
    <property type="match status" value="1"/>
</dbReference>
<dbReference type="PROSITE" id="PS00447">
    <property type="entry name" value="DNA_POLYMERASE_A"/>
    <property type="match status" value="1"/>
</dbReference>
<reference key="1">
    <citation type="submission" date="1998-06" db="EMBL/GenBank/DDBJ databases">
        <title>DNA polymerase I sequence from Salmonella typhimurium.</title>
        <authorList>
            <person name="Huang Y.P."/>
            <person name="Ito J."/>
        </authorList>
    </citation>
    <scope>NUCLEOTIDE SEQUENCE [GENOMIC DNA]</scope>
    <source>
        <strain>LT2</strain>
    </source>
</reference>
<reference key="2">
    <citation type="journal article" date="2001" name="Nature">
        <title>Complete genome sequence of Salmonella enterica serovar Typhimurium LT2.</title>
        <authorList>
            <person name="McClelland M."/>
            <person name="Sanderson K.E."/>
            <person name="Spieth J."/>
            <person name="Clifton S.W."/>
            <person name="Latreille P."/>
            <person name="Courtney L."/>
            <person name="Porwollik S."/>
            <person name="Ali J."/>
            <person name="Dante M."/>
            <person name="Du F."/>
            <person name="Hou S."/>
            <person name="Layman D."/>
            <person name="Leonard S."/>
            <person name="Nguyen C."/>
            <person name="Scott K."/>
            <person name="Holmes A."/>
            <person name="Grewal N."/>
            <person name="Mulvaney E."/>
            <person name="Ryan E."/>
            <person name="Sun H."/>
            <person name="Florea L."/>
            <person name="Miller W."/>
            <person name="Stoneking T."/>
            <person name="Nhan M."/>
            <person name="Waterston R."/>
            <person name="Wilson R.K."/>
        </authorList>
    </citation>
    <scope>NUCLEOTIDE SEQUENCE [LARGE SCALE GENOMIC DNA]</scope>
    <source>
        <strain>LT2 / SGSC1412 / ATCC 700720</strain>
    </source>
</reference>
<sequence length="928" mass="103129">MVQIPENPLILVDGSSYLYRAYHAFPPLTNSAGEPTGAMYGVLNMLRSLIMQYQPTHAAVVFDAKGKTFRDELFEHYKSHRPPMPDDLRAQIEPLHAMVKAMGLPLLAVSGVEADDVIGTLAREAEKVGRPVLISTGDKDMAQLVTPNITLINTMTNTILGPDEVVNKYGVPPELIIDFLALMGDSSDNIPGVPGVGEKTAQALLQGLGGLDTLYAEPEKIAGLTFRGAKTMAGKLAQNKDVAYLSYKLATIKTDVELELTCEQLEVQQPIADELLGLFKKYEFKRWTADVESGKWLQAKGAKPAAKPQETVVIDESPSEPAAALSYENYVTILDDVTLESWIEKLKKAPVFAFDTETDSLDNIAANLVGLSFAIEPGVAAYVPVAHDYLDAPDQISRQRALELLKPLLEDEKVRKVGQNLKYDRGVLQNYGIELRGIAFDTMLESYILNSVAGRHDMDSLSDRWLKHKTITFEDIAGKGKNQLTFNQIALEEAGRYAAEDADVTLQLHLKMWPELQQHKGPLNVFENIEMPLVPVLSRVERNGVKIDPAVLHKHSEEITLRLAELEKKAHDIAGEAFNLSSTKQLQTILFEKQGIKPLKKTPGGAPSTSEEVLEELALDYPLPKVILEYRGLAKLKSTYTDKLPLMINPKTGRVHTSYHQAVTATGRLSSTDPNLQNIPVRNEEGRRIRQAFIAPEDYLIVSADYSQIELRIMAHLSRDKGLLTAFAEGKDIHRATAAEVFGLPLDSVTGEQRRSAKAINFGLIYGMSAFGLSRQLNIPRKEAQKYMDLYFERYPGVLEYMERTRAQAKEQGYVETLEGRRLYLPDIKSSNAARRAGAERAAINAPMQGTAADIIKRAMIAVDAWLQAEQPRVRMIMQVHDELVFEVHKDDLDAVAKRIHQLMENCTRIDVPLLVEVGSGENWDQAH</sequence>
<feature type="chain" id="PRO_0000101252" description="DNA polymerase I">
    <location>
        <begin position="1"/>
        <end position="928"/>
    </location>
</feature>
<feature type="domain" description="5'-3' exonuclease">
    <location>
        <begin position="1"/>
        <end position="323"/>
    </location>
</feature>
<feature type="domain" description="3'-5' exonuclease">
    <location>
        <begin position="324"/>
        <end position="517"/>
    </location>
</feature>
<feature type="region of interest" description="Klenow fragment">
    <location>
        <begin position="324"/>
        <end position="928"/>
    </location>
</feature>
<feature type="region of interest" description="Polymerase">
    <location>
        <begin position="521"/>
        <end position="928"/>
    </location>
</feature>
<feature type="sequence conflict" description="In Ref. 1; AAG43170." evidence="1" ref="1">
    <original>G</original>
    <variation>R</variation>
    <location>
        <position position="751"/>
    </location>
</feature>
<feature type="sequence conflict" description="In Ref. 1; AAG43170." evidence="1" ref="1">
    <original>M</original>
    <variation>T</variation>
    <location>
        <position position="848"/>
    </location>
</feature>
<feature type="sequence conflict" description="In Ref. 1; AAG43170." evidence="1" ref="1">
    <original>L</original>
    <variation>I</variation>
    <location>
        <position position="867"/>
    </location>
</feature>